<organism>
    <name type="scientific">Salmonella arizonae (strain ATCC BAA-731 / CDC346-86 / RSK2980)</name>
    <dbReference type="NCBI Taxonomy" id="41514"/>
    <lineage>
        <taxon>Bacteria</taxon>
        <taxon>Pseudomonadati</taxon>
        <taxon>Pseudomonadota</taxon>
        <taxon>Gammaproteobacteria</taxon>
        <taxon>Enterobacterales</taxon>
        <taxon>Enterobacteriaceae</taxon>
        <taxon>Salmonella</taxon>
    </lineage>
</organism>
<comment type="function">
    <text evidence="1">An aminoacyl-tRNA editing enzyme that deacylates mischarged D-aminoacyl-tRNAs. Also deacylates mischarged glycyl-tRNA(Ala), protecting cells against glycine mischarging by AlaRS. Acts via tRNA-based rather than protein-based catalysis; rejects L-amino acids rather than detecting D-amino acids in the active site. By recycling D-aminoacyl-tRNA to D-amino acids and free tRNA molecules, this enzyme counteracts the toxicity associated with the formation of D-aminoacyl-tRNA entities in vivo and helps enforce protein L-homochirality.</text>
</comment>
<comment type="catalytic activity">
    <reaction evidence="1">
        <text>glycyl-tRNA(Ala) + H2O = tRNA(Ala) + glycine + H(+)</text>
        <dbReference type="Rhea" id="RHEA:53744"/>
        <dbReference type="Rhea" id="RHEA-COMP:9657"/>
        <dbReference type="Rhea" id="RHEA-COMP:13640"/>
        <dbReference type="ChEBI" id="CHEBI:15377"/>
        <dbReference type="ChEBI" id="CHEBI:15378"/>
        <dbReference type="ChEBI" id="CHEBI:57305"/>
        <dbReference type="ChEBI" id="CHEBI:78442"/>
        <dbReference type="ChEBI" id="CHEBI:78522"/>
        <dbReference type="EC" id="3.1.1.96"/>
    </reaction>
</comment>
<comment type="catalytic activity">
    <reaction evidence="1">
        <text>a D-aminoacyl-tRNA + H2O = a tRNA + a D-alpha-amino acid + H(+)</text>
        <dbReference type="Rhea" id="RHEA:13953"/>
        <dbReference type="Rhea" id="RHEA-COMP:10123"/>
        <dbReference type="Rhea" id="RHEA-COMP:10124"/>
        <dbReference type="ChEBI" id="CHEBI:15377"/>
        <dbReference type="ChEBI" id="CHEBI:15378"/>
        <dbReference type="ChEBI" id="CHEBI:59871"/>
        <dbReference type="ChEBI" id="CHEBI:78442"/>
        <dbReference type="ChEBI" id="CHEBI:79333"/>
        <dbReference type="EC" id="3.1.1.96"/>
    </reaction>
</comment>
<comment type="subunit">
    <text evidence="1">Homodimer.</text>
</comment>
<comment type="subcellular location">
    <subcellularLocation>
        <location evidence="1">Cytoplasm</location>
    </subcellularLocation>
</comment>
<comment type="domain">
    <text evidence="1">A Gly-cisPro motif from one monomer fits into the active site of the other monomer to allow specific chiral rejection of L-amino acids.</text>
</comment>
<comment type="similarity">
    <text evidence="1">Belongs to the DTD family.</text>
</comment>
<feature type="chain" id="PRO_1000081663" description="D-aminoacyl-tRNA deacylase">
    <location>
        <begin position="1"/>
        <end position="145"/>
    </location>
</feature>
<feature type="short sequence motif" description="Gly-cisPro motif, important for rejection of L-amino acids" evidence="1">
    <location>
        <begin position="137"/>
        <end position="138"/>
    </location>
</feature>
<proteinExistence type="inferred from homology"/>
<accession>A9MIA3</accession>
<gene>
    <name evidence="1" type="primary">dtd</name>
    <name type="ordered locus">SARI_03638</name>
</gene>
<evidence type="ECO:0000255" key="1">
    <source>
        <dbReference type="HAMAP-Rule" id="MF_00518"/>
    </source>
</evidence>
<keyword id="KW-0963">Cytoplasm</keyword>
<keyword id="KW-0378">Hydrolase</keyword>
<keyword id="KW-1185">Reference proteome</keyword>
<keyword id="KW-0694">RNA-binding</keyword>
<keyword id="KW-0820">tRNA-binding</keyword>
<sequence>MIALIQRVTRASVTVEDEVTGEIGPGLLVLLGVEKEDDEQKANRLCERVLGYRIFSDADGKMNLNVQQAGGSVLVVSQFTLAADTERGMRPSFSGGAAPDRAQALYEYFVGRCRQQAINTQTGRFAADMQVELVNDGPVTFWLQV</sequence>
<dbReference type="EC" id="3.1.1.96" evidence="1"/>
<dbReference type="EMBL" id="CP000880">
    <property type="protein sequence ID" value="ABX23449.1"/>
    <property type="molecule type" value="Genomic_DNA"/>
</dbReference>
<dbReference type="SMR" id="A9MIA3"/>
<dbReference type="STRING" id="41514.SARI_03638"/>
<dbReference type="KEGG" id="ses:SARI_03638"/>
<dbReference type="HOGENOM" id="CLU_076901_1_0_6"/>
<dbReference type="Proteomes" id="UP000002084">
    <property type="component" value="Chromosome"/>
</dbReference>
<dbReference type="GO" id="GO:0005737">
    <property type="term" value="C:cytoplasm"/>
    <property type="evidence" value="ECO:0007669"/>
    <property type="project" value="UniProtKB-SubCell"/>
</dbReference>
<dbReference type="GO" id="GO:0051500">
    <property type="term" value="F:D-tyrosyl-tRNA(Tyr) deacylase activity"/>
    <property type="evidence" value="ECO:0007669"/>
    <property type="project" value="TreeGrafter"/>
</dbReference>
<dbReference type="GO" id="GO:0106026">
    <property type="term" value="F:Gly-tRNA(Ala) deacylase activity"/>
    <property type="evidence" value="ECO:0007669"/>
    <property type="project" value="UniProtKB-UniRule"/>
</dbReference>
<dbReference type="GO" id="GO:0043908">
    <property type="term" value="F:Ser(Gly)-tRNA(Ala) hydrolase activity"/>
    <property type="evidence" value="ECO:0007669"/>
    <property type="project" value="UniProtKB-UniRule"/>
</dbReference>
<dbReference type="GO" id="GO:0000049">
    <property type="term" value="F:tRNA binding"/>
    <property type="evidence" value="ECO:0007669"/>
    <property type="project" value="UniProtKB-UniRule"/>
</dbReference>
<dbReference type="GO" id="GO:0019478">
    <property type="term" value="P:D-amino acid catabolic process"/>
    <property type="evidence" value="ECO:0007669"/>
    <property type="project" value="UniProtKB-UniRule"/>
</dbReference>
<dbReference type="CDD" id="cd00563">
    <property type="entry name" value="Dtyr_deacylase"/>
    <property type="match status" value="1"/>
</dbReference>
<dbReference type="FunFam" id="3.50.80.10:FF:000001">
    <property type="entry name" value="D-aminoacyl-tRNA deacylase"/>
    <property type="match status" value="1"/>
</dbReference>
<dbReference type="Gene3D" id="3.50.80.10">
    <property type="entry name" value="D-tyrosyl-tRNA(Tyr) deacylase"/>
    <property type="match status" value="1"/>
</dbReference>
<dbReference type="HAMAP" id="MF_00518">
    <property type="entry name" value="Deacylase_Dtd"/>
    <property type="match status" value="1"/>
</dbReference>
<dbReference type="InterPro" id="IPR003732">
    <property type="entry name" value="Daa-tRNA_deacyls_DTD"/>
</dbReference>
<dbReference type="InterPro" id="IPR023509">
    <property type="entry name" value="DTD-like_sf"/>
</dbReference>
<dbReference type="NCBIfam" id="TIGR00256">
    <property type="entry name" value="D-aminoacyl-tRNA deacylase"/>
    <property type="match status" value="1"/>
</dbReference>
<dbReference type="PANTHER" id="PTHR10472:SF5">
    <property type="entry name" value="D-AMINOACYL-TRNA DEACYLASE 1"/>
    <property type="match status" value="1"/>
</dbReference>
<dbReference type="PANTHER" id="PTHR10472">
    <property type="entry name" value="D-TYROSYL-TRNA TYR DEACYLASE"/>
    <property type="match status" value="1"/>
</dbReference>
<dbReference type="Pfam" id="PF02580">
    <property type="entry name" value="Tyr_Deacylase"/>
    <property type="match status" value="1"/>
</dbReference>
<dbReference type="SUPFAM" id="SSF69500">
    <property type="entry name" value="DTD-like"/>
    <property type="match status" value="1"/>
</dbReference>
<reference key="1">
    <citation type="submission" date="2007-11" db="EMBL/GenBank/DDBJ databases">
        <authorList>
            <consortium name="The Salmonella enterica serovar Arizonae Genome Sequencing Project"/>
            <person name="McClelland M."/>
            <person name="Sanderson E.K."/>
            <person name="Porwollik S."/>
            <person name="Spieth J."/>
            <person name="Clifton W.S."/>
            <person name="Fulton R."/>
            <person name="Chunyan W."/>
            <person name="Wollam A."/>
            <person name="Shah N."/>
            <person name="Pepin K."/>
            <person name="Bhonagiri V."/>
            <person name="Nash W."/>
            <person name="Johnson M."/>
            <person name="Thiruvilangam P."/>
            <person name="Wilson R."/>
        </authorList>
    </citation>
    <scope>NUCLEOTIDE SEQUENCE [LARGE SCALE GENOMIC DNA]</scope>
    <source>
        <strain>ATCC BAA-731 / CDC346-86 / RSK2980</strain>
    </source>
</reference>
<protein>
    <recommendedName>
        <fullName evidence="1">D-aminoacyl-tRNA deacylase</fullName>
        <shortName evidence="1">DTD</shortName>
        <ecNumber evidence="1">3.1.1.96</ecNumber>
    </recommendedName>
    <alternativeName>
        <fullName evidence="1">Gly-tRNA(Ala) deacylase</fullName>
    </alternativeName>
</protein>
<name>DTD_SALAR</name>